<comment type="function">
    <text evidence="1">May control the interaction of photosystem II (PSII) cores with the light-harvesting antenna, regulates electron flow through the 2 photosystem reaction centers. PSII is a light-driven water plastoquinone oxidoreductase, using light energy to abstract electrons from H(2)O, generating a proton gradient subsequently used for ATP formation.</text>
</comment>
<comment type="subunit">
    <text evidence="1">PSII is composed of 1 copy each of membrane proteins PsbA, PsbB, PsbC, PsbD, PsbE, PsbF, PsbH, PsbI, PsbJ, PsbK, PsbL, PsbM, PsbT, PsbY, PsbZ, Psb30/Ycf12, at least 3 peripheral proteins of the oxygen-evolving complex and a large number of cofactors. It forms dimeric complexes.</text>
</comment>
<comment type="subcellular location">
    <subcellularLocation>
        <location evidence="1">Plastid</location>
        <location evidence="1">Chloroplast thylakoid membrane</location>
        <topology evidence="1">Multi-pass membrane protein</topology>
    </subcellularLocation>
</comment>
<comment type="similarity">
    <text evidence="1">Belongs to the PsbZ family.</text>
</comment>
<name>PSBZ_MAGAC</name>
<gene>
    <name evidence="1" type="primary">psbZ</name>
</gene>
<protein>
    <recommendedName>
        <fullName evidence="1">Photosystem II reaction center protein Z</fullName>
        <shortName evidence="1">PSII-Z</shortName>
    </recommendedName>
</protein>
<sequence length="62" mass="6531">MTIAFQLAVFALIATSSILLISVPVVFASSDGWSSNKNVVFSGTSLWIGLVFLVAILNSLIS</sequence>
<feature type="chain" id="PRO_0000217710" description="Photosystem II reaction center protein Z">
    <location>
        <begin position="1"/>
        <end position="62"/>
    </location>
</feature>
<feature type="transmembrane region" description="Helical" evidence="1">
    <location>
        <begin position="8"/>
        <end position="28"/>
    </location>
</feature>
<feature type="transmembrane region" description="Helical" evidence="1">
    <location>
        <begin position="41"/>
        <end position="61"/>
    </location>
</feature>
<proteinExistence type="inferred from homology"/>
<reference key="1">
    <citation type="journal article" date="2005" name="Am. J. Bot.">
        <title>The tortoise and the hare II: relative utility of 21 noncoding chloroplast DNA sequences for phylogenetic analysis.</title>
        <authorList>
            <person name="Shaw J."/>
            <person name="Lickey E.B."/>
            <person name="Beck J.T."/>
            <person name="Farmer S.B."/>
            <person name="Liu W."/>
            <person name="Miller J."/>
            <person name="Siripun K.C."/>
            <person name="Winder C.T."/>
            <person name="Schilling E.E."/>
            <person name="Small R.L."/>
        </authorList>
        <dbReference type="AGRICOLA" id="IND43689705"/>
    </citation>
    <scope>NUCLEOTIDE SEQUENCE [GENOMIC DNA]</scope>
</reference>
<dbReference type="EMBL" id="AY727484">
    <property type="protein sequence ID" value="AAW56533.1"/>
    <property type="molecule type" value="Genomic_DNA"/>
</dbReference>
<dbReference type="SMR" id="Q5IHB0"/>
<dbReference type="GO" id="GO:0009535">
    <property type="term" value="C:chloroplast thylakoid membrane"/>
    <property type="evidence" value="ECO:0007669"/>
    <property type="project" value="UniProtKB-SubCell"/>
</dbReference>
<dbReference type="GO" id="GO:0009539">
    <property type="term" value="C:photosystem II reaction center"/>
    <property type="evidence" value="ECO:0007669"/>
    <property type="project" value="InterPro"/>
</dbReference>
<dbReference type="GO" id="GO:0015979">
    <property type="term" value="P:photosynthesis"/>
    <property type="evidence" value="ECO:0007669"/>
    <property type="project" value="UniProtKB-UniRule"/>
</dbReference>
<dbReference type="GO" id="GO:0042549">
    <property type="term" value="P:photosystem II stabilization"/>
    <property type="evidence" value="ECO:0007669"/>
    <property type="project" value="InterPro"/>
</dbReference>
<dbReference type="FunFam" id="1.10.287.740:FF:000001">
    <property type="entry name" value="Photosystem II reaction center protein Z"/>
    <property type="match status" value="1"/>
</dbReference>
<dbReference type="Gene3D" id="1.10.287.740">
    <property type="entry name" value="Photosystem II PsbZ, reaction centre"/>
    <property type="match status" value="1"/>
</dbReference>
<dbReference type="HAMAP" id="MF_00644">
    <property type="entry name" value="PSII_PsbZ"/>
    <property type="match status" value="1"/>
</dbReference>
<dbReference type="InterPro" id="IPR002644">
    <property type="entry name" value="PSII_PsbZ"/>
</dbReference>
<dbReference type="InterPro" id="IPR036512">
    <property type="entry name" value="PSII_PsbZ_sf"/>
</dbReference>
<dbReference type="NCBIfam" id="TIGR03043">
    <property type="entry name" value="PS_II_psbZ"/>
    <property type="match status" value="1"/>
</dbReference>
<dbReference type="PANTHER" id="PTHR34971">
    <property type="entry name" value="PHOTOSYSTEM II REACTION CENTER PROTEIN Z"/>
    <property type="match status" value="1"/>
</dbReference>
<dbReference type="PANTHER" id="PTHR34971:SF2">
    <property type="entry name" value="PHOTOSYSTEM II REACTION CENTER PROTEIN Z"/>
    <property type="match status" value="1"/>
</dbReference>
<dbReference type="Pfam" id="PF01737">
    <property type="entry name" value="Ycf9"/>
    <property type="match status" value="1"/>
</dbReference>
<dbReference type="SUPFAM" id="SSF161055">
    <property type="entry name" value="PsbZ-like"/>
    <property type="match status" value="1"/>
</dbReference>
<organism>
    <name type="scientific">Magnolia acuminata</name>
    <name type="common">Cucumber tree</name>
    <name type="synonym">Magnolia virginiana var. acuminata</name>
    <dbReference type="NCBI Taxonomy" id="3404"/>
    <lineage>
        <taxon>Eukaryota</taxon>
        <taxon>Viridiplantae</taxon>
        <taxon>Streptophyta</taxon>
        <taxon>Embryophyta</taxon>
        <taxon>Tracheophyta</taxon>
        <taxon>Spermatophyta</taxon>
        <taxon>Magnoliopsida</taxon>
        <taxon>Magnoliidae</taxon>
        <taxon>Magnoliales</taxon>
        <taxon>Magnoliaceae</taxon>
        <taxon>Magnolia</taxon>
    </lineage>
</organism>
<geneLocation type="chloroplast"/>
<keyword id="KW-0150">Chloroplast</keyword>
<keyword id="KW-0472">Membrane</keyword>
<keyword id="KW-0602">Photosynthesis</keyword>
<keyword id="KW-0604">Photosystem II</keyword>
<keyword id="KW-0934">Plastid</keyword>
<keyword id="KW-0674">Reaction center</keyword>
<keyword id="KW-0793">Thylakoid</keyword>
<keyword id="KW-0812">Transmembrane</keyword>
<keyword id="KW-1133">Transmembrane helix</keyword>
<evidence type="ECO:0000255" key="1">
    <source>
        <dbReference type="HAMAP-Rule" id="MF_00644"/>
    </source>
</evidence>
<accession>Q5IHB0</accession>